<sequence length="122" mass="13180">MIQTKSRLDVADNTGAKSVLCIKVLGGSKRRYASVGDIIKVSIKEAAPRGRVKKGEVYSAVVVRTAKGIRRGDGSLVKFDGNAAVLLNAKLEPIGTRIFGPVTRELRTERFMKIVSLAPEVL</sequence>
<feature type="chain" id="PRO_1000055495" description="Large ribosomal subunit protein uL14">
    <location>
        <begin position="1"/>
        <end position="122"/>
    </location>
</feature>
<protein>
    <recommendedName>
        <fullName evidence="1">Large ribosomal subunit protein uL14</fullName>
    </recommendedName>
    <alternativeName>
        <fullName evidence="2">50S ribosomal protein L14</fullName>
    </alternativeName>
</protein>
<dbReference type="EMBL" id="CP000512">
    <property type="protein sequence ID" value="ABM31215.1"/>
    <property type="molecule type" value="Genomic_DNA"/>
</dbReference>
<dbReference type="RefSeq" id="WP_011793786.1">
    <property type="nucleotide sequence ID" value="NC_008752.1"/>
</dbReference>
<dbReference type="SMR" id="A1TJS7"/>
<dbReference type="STRING" id="397945.Aave_0611"/>
<dbReference type="KEGG" id="aav:Aave_0611"/>
<dbReference type="eggNOG" id="COG0093">
    <property type="taxonomic scope" value="Bacteria"/>
</dbReference>
<dbReference type="HOGENOM" id="CLU_095071_2_1_4"/>
<dbReference type="OrthoDB" id="9806379at2"/>
<dbReference type="Proteomes" id="UP000002596">
    <property type="component" value="Chromosome"/>
</dbReference>
<dbReference type="GO" id="GO:0022625">
    <property type="term" value="C:cytosolic large ribosomal subunit"/>
    <property type="evidence" value="ECO:0007669"/>
    <property type="project" value="TreeGrafter"/>
</dbReference>
<dbReference type="GO" id="GO:0070180">
    <property type="term" value="F:large ribosomal subunit rRNA binding"/>
    <property type="evidence" value="ECO:0007669"/>
    <property type="project" value="TreeGrafter"/>
</dbReference>
<dbReference type="GO" id="GO:0003735">
    <property type="term" value="F:structural constituent of ribosome"/>
    <property type="evidence" value="ECO:0007669"/>
    <property type="project" value="InterPro"/>
</dbReference>
<dbReference type="GO" id="GO:0006412">
    <property type="term" value="P:translation"/>
    <property type="evidence" value="ECO:0007669"/>
    <property type="project" value="UniProtKB-UniRule"/>
</dbReference>
<dbReference type="CDD" id="cd00337">
    <property type="entry name" value="Ribosomal_uL14"/>
    <property type="match status" value="1"/>
</dbReference>
<dbReference type="FunFam" id="2.40.150.20:FF:000001">
    <property type="entry name" value="50S ribosomal protein L14"/>
    <property type="match status" value="1"/>
</dbReference>
<dbReference type="Gene3D" id="2.40.150.20">
    <property type="entry name" value="Ribosomal protein L14"/>
    <property type="match status" value="1"/>
</dbReference>
<dbReference type="HAMAP" id="MF_01367">
    <property type="entry name" value="Ribosomal_uL14"/>
    <property type="match status" value="1"/>
</dbReference>
<dbReference type="InterPro" id="IPR000218">
    <property type="entry name" value="Ribosomal_uL14"/>
</dbReference>
<dbReference type="InterPro" id="IPR005745">
    <property type="entry name" value="Ribosomal_uL14_bac-type"/>
</dbReference>
<dbReference type="InterPro" id="IPR019972">
    <property type="entry name" value="Ribosomal_uL14_CS"/>
</dbReference>
<dbReference type="InterPro" id="IPR036853">
    <property type="entry name" value="Ribosomal_uL14_sf"/>
</dbReference>
<dbReference type="NCBIfam" id="TIGR01067">
    <property type="entry name" value="rplN_bact"/>
    <property type="match status" value="1"/>
</dbReference>
<dbReference type="PANTHER" id="PTHR11761">
    <property type="entry name" value="50S/60S RIBOSOMAL PROTEIN L14/L23"/>
    <property type="match status" value="1"/>
</dbReference>
<dbReference type="PANTHER" id="PTHR11761:SF3">
    <property type="entry name" value="LARGE RIBOSOMAL SUBUNIT PROTEIN UL14M"/>
    <property type="match status" value="1"/>
</dbReference>
<dbReference type="Pfam" id="PF00238">
    <property type="entry name" value="Ribosomal_L14"/>
    <property type="match status" value="1"/>
</dbReference>
<dbReference type="SMART" id="SM01374">
    <property type="entry name" value="Ribosomal_L14"/>
    <property type="match status" value="1"/>
</dbReference>
<dbReference type="SUPFAM" id="SSF50193">
    <property type="entry name" value="Ribosomal protein L14"/>
    <property type="match status" value="1"/>
</dbReference>
<dbReference type="PROSITE" id="PS00049">
    <property type="entry name" value="RIBOSOMAL_L14"/>
    <property type="match status" value="1"/>
</dbReference>
<gene>
    <name evidence="1" type="primary">rplN</name>
    <name type="ordered locus">Aave_0611</name>
</gene>
<reference key="1">
    <citation type="submission" date="2006-12" db="EMBL/GenBank/DDBJ databases">
        <title>Complete sequence of Acidovorax avenae subsp. citrulli AAC00-1.</title>
        <authorList>
            <person name="Copeland A."/>
            <person name="Lucas S."/>
            <person name="Lapidus A."/>
            <person name="Barry K."/>
            <person name="Detter J.C."/>
            <person name="Glavina del Rio T."/>
            <person name="Dalin E."/>
            <person name="Tice H."/>
            <person name="Pitluck S."/>
            <person name="Kiss H."/>
            <person name="Brettin T."/>
            <person name="Bruce D."/>
            <person name="Han C."/>
            <person name="Tapia R."/>
            <person name="Gilna P."/>
            <person name="Schmutz J."/>
            <person name="Larimer F."/>
            <person name="Land M."/>
            <person name="Hauser L."/>
            <person name="Kyrpides N."/>
            <person name="Kim E."/>
            <person name="Stahl D."/>
            <person name="Richardson P."/>
        </authorList>
    </citation>
    <scope>NUCLEOTIDE SEQUENCE [LARGE SCALE GENOMIC DNA]</scope>
    <source>
        <strain>AAC00-1</strain>
    </source>
</reference>
<organism>
    <name type="scientific">Paracidovorax citrulli (strain AAC00-1)</name>
    <name type="common">Acidovorax citrulli</name>
    <dbReference type="NCBI Taxonomy" id="397945"/>
    <lineage>
        <taxon>Bacteria</taxon>
        <taxon>Pseudomonadati</taxon>
        <taxon>Pseudomonadota</taxon>
        <taxon>Betaproteobacteria</taxon>
        <taxon>Burkholderiales</taxon>
        <taxon>Comamonadaceae</taxon>
        <taxon>Paracidovorax</taxon>
    </lineage>
</organism>
<accession>A1TJS7</accession>
<evidence type="ECO:0000255" key="1">
    <source>
        <dbReference type="HAMAP-Rule" id="MF_01367"/>
    </source>
</evidence>
<evidence type="ECO:0000305" key="2"/>
<proteinExistence type="inferred from homology"/>
<name>RL14_PARC0</name>
<keyword id="KW-0687">Ribonucleoprotein</keyword>
<keyword id="KW-0689">Ribosomal protein</keyword>
<keyword id="KW-0694">RNA-binding</keyword>
<keyword id="KW-0699">rRNA-binding</keyword>
<comment type="function">
    <text evidence="1">Binds to 23S rRNA. Forms part of two intersubunit bridges in the 70S ribosome.</text>
</comment>
<comment type="subunit">
    <text evidence="1">Part of the 50S ribosomal subunit. Forms a cluster with proteins L3 and L19. In the 70S ribosome, L14 and L19 interact and together make contacts with the 16S rRNA in bridges B5 and B8.</text>
</comment>
<comment type="similarity">
    <text evidence="1">Belongs to the universal ribosomal protein uL14 family.</text>
</comment>